<keyword id="KW-0068">Autocatalytic cleavage</keyword>
<keyword id="KW-0963">Cytoplasm</keyword>
<keyword id="KW-0210">Decarboxylase</keyword>
<keyword id="KW-0456">Lyase</keyword>
<keyword id="KW-0566">Pantothenate biosynthesis</keyword>
<keyword id="KW-0670">Pyruvate</keyword>
<keyword id="KW-1185">Reference proteome</keyword>
<keyword id="KW-0704">Schiff base</keyword>
<keyword id="KW-0865">Zymogen</keyword>
<protein>
    <recommendedName>
        <fullName evidence="1">Aspartate 1-decarboxylase</fullName>
        <ecNumber evidence="1">4.1.1.11</ecNumber>
    </recommendedName>
    <alternativeName>
        <fullName evidence="1">Aspartate alpha-decarboxylase</fullName>
    </alternativeName>
    <component>
        <recommendedName>
            <fullName evidence="1">Aspartate 1-decarboxylase beta chain</fullName>
        </recommendedName>
    </component>
    <component>
        <recommendedName>
            <fullName evidence="1">Aspartate 1-decarboxylase alpha chain</fullName>
        </recommendedName>
    </component>
</protein>
<reference key="1">
    <citation type="journal article" date="2004" name="PLoS Biol.">
        <title>Genomic insights into methanotrophy: the complete genome sequence of Methylococcus capsulatus (Bath).</title>
        <authorList>
            <person name="Ward N.L."/>
            <person name="Larsen O."/>
            <person name="Sakwa J."/>
            <person name="Bruseth L."/>
            <person name="Khouri H.M."/>
            <person name="Durkin A.S."/>
            <person name="Dimitrov G."/>
            <person name="Jiang L."/>
            <person name="Scanlan D."/>
            <person name="Kang K.H."/>
            <person name="Lewis M.R."/>
            <person name="Nelson K.E."/>
            <person name="Methe B.A."/>
            <person name="Wu M."/>
            <person name="Heidelberg J.F."/>
            <person name="Paulsen I.T."/>
            <person name="Fouts D.E."/>
            <person name="Ravel J."/>
            <person name="Tettelin H."/>
            <person name="Ren Q."/>
            <person name="Read T.D."/>
            <person name="DeBoy R.T."/>
            <person name="Seshadri R."/>
            <person name="Salzberg S.L."/>
            <person name="Jensen H.B."/>
            <person name="Birkeland N.K."/>
            <person name="Nelson W.C."/>
            <person name="Dodson R.J."/>
            <person name="Grindhaug S.H."/>
            <person name="Holt I.E."/>
            <person name="Eidhammer I."/>
            <person name="Jonasen I."/>
            <person name="Vanaken S."/>
            <person name="Utterback T.R."/>
            <person name="Feldblyum T.V."/>
            <person name="Fraser C.M."/>
            <person name="Lillehaug J.R."/>
            <person name="Eisen J.A."/>
        </authorList>
    </citation>
    <scope>NUCLEOTIDE SEQUENCE [LARGE SCALE GENOMIC DNA]</scope>
    <source>
        <strain>ATCC 33009 / NCIMB 11132 / Bath</strain>
    </source>
</reference>
<gene>
    <name evidence="1" type="primary">panD</name>
    <name type="ordered locus">MCA2316</name>
</gene>
<feature type="chain" id="PRO_0000023113" description="Aspartate 1-decarboxylase beta chain" evidence="1">
    <location>
        <begin position="1"/>
        <end position="24"/>
    </location>
</feature>
<feature type="chain" id="PRO_0000023114" description="Aspartate 1-decarboxylase alpha chain" evidence="1">
    <location>
        <begin position="25"/>
        <end position="126"/>
    </location>
</feature>
<feature type="active site" description="Schiff-base intermediate with substrate; via pyruvic acid" evidence="1">
    <location>
        <position position="25"/>
    </location>
</feature>
<feature type="active site" description="Proton donor" evidence="1">
    <location>
        <position position="58"/>
    </location>
</feature>
<feature type="binding site" evidence="1">
    <location>
        <position position="57"/>
    </location>
    <ligand>
        <name>substrate</name>
    </ligand>
</feature>
<feature type="binding site" evidence="1">
    <location>
        <begin position="73"/>
        <end position="75"/>
    </location>
    <ligand>
        <name>substrate</name>
    </ligand>
</feature>
<feature type="modified residue" description="Pyruvic acid (Ser)" evidence="1">
    <location>
        <position position="25"/>
    </location>
</feature>
<proteinExistence type="inferred from homology"/>
<accession>Q605G8</accession>
<sequence length="126" mass="13631">MQTTMLKAKLHRARVTHSELEYEGSCAIDGSLLDCAGIREYEQIQIYNVNNGERFTTYAIRAADGSGTISVNGAAARLAAVGDIVIICAYVGLNQAELAAYRPNLVYVDENNQITRTSHAIPVQAA</sequence>
<organism>
    <name type="scientific">Methylococcus capsulatus (strain ATCC 33009 / NCIMB 11132 / Bath)</name>
    <dbReference type="NCBI Taxonomy" id="243233"/>
    <lineage>
        <taxon>Bacteria</taxon>
        <taxon>Pseudomonadati</taxon>
        <taxon>Pseudomonadota</taxon>
        <taxon>Gammaproteobacteria</taxon>
        <taxon>Methylococcales</taxon>
        <taxon>Methylococcaceae</taxon>
        <taxon>Methylococcus</taxon>
    </lineage>
</organism>
<evidence type="ECO:0000255" key="1">
    <source>
        <dbReference type="HAMAP-Rule" id="MF_00446"/>
    </source>
</evidence>
<dbReference type="EC" id="4.1.1.11" evidence="1"/>
<dbReference type="EMBL" id="AE017282">
    <property type="protein sequence ID" value="AAU91631.1"/>
    <property type="molecule type" value="Genomic_DNA"/>
</dbReference>
<dbReference type="RefSeq" id="WP_010961544.1">
    <property type="nucleotide sequence ID" value="NC_002977.6"/>
</dbReference>
<dbReference type="SMR" id="Q605G8"/>
<dbReference type="STRING" id="243233.MCA2316"/>
<dbReference type="GeneID" id="88224520"/>
<dbReference type="KEGG" id="mca:MCA2316"/>
<dbReference type="eggNOG" id="COG0853">
    <property type="taxonomic scope" value="Bacteria"/>
</dbReference>
<dbReference type="HOGENOM" id="CLU_115305_2_1_6"/>
<dbReference type="UniPathway" id="UPA00028">
    <property type="reaction ID" value="UER00002"/>
</dbReference>
<dbReference type="Proteomes" id="UP000006821">
    <property type="component" value="Chromosome"/>
</dbReference>
<dbReference type="GO" id="GO:0005829">
    <property type="term" value="C:cytosol"/>
    <property type="evidence" value="ECO:0007669"/>
    <property type="project" value="TreeGrafter"/>
</dbReference>
<dbReference type="GO" id="GO:0004068">
    <property type="term" value="F:aspartate 1-decarboxylase activity"/>
    <property type="evidence" value="ECO:0007669"/>
    <property type="project" value="UniProtKB-UniRule"/>
</dbReference>
<dbReference type="GO" id="GO:0006523">
    <property type="term" value="P:alanine biosynthetic process"/>
    <property type="evidence" value="ECO:0007669"/>
    <property type="project" value="InterPro"/>
</dbReference>
<dbReference type="GO" id="GO:0015940">
    <property type="term" value="P:pantothenate biosynthetic process"/>
    <property type="evidence" value="ECO:0007669"/>
    <property type="project" value="UniProtKB-UniRule"/>
</dbReference>
<dbReference type="CDD" id="cd06919">
    <property type="entry name" value="Asp_decarbox"/>
    <property type="match status" value="1"/>
</dbReference>
<dbReference type="Gene3D" id="2.40.40.20">
    <property type="match status" value="1"/>
</dbReference>
<dbReference type="HAMAP" id="MF_00446">
    <property type="entry name" value="PanD"/>
    <property type="match status" value="1"/>
</dbReference>
<dbReference type="InterPro" id="IPR009010">
    <property type="entry name" value="Asp_de-COase-like_dom_sf"/>
</dbReference>
<dbReference type="InterPro" id="IPR003190">
    <property type="entry name" value="Asp_decarbox"/>
</dbReference>
<dbReference type="NCBIfam" id="TIGR00223">
    <property type="entry name" value="panD"/>
    <property type="match status" value="1"/>
</dbReference>
<dbReference type="PANTHER" id="PTHR21012">
    <property type="entry name" value="ASPARTATE 1-DECARBOXYLASE"/>
    <property type="match status" value="1"/>
</dbReference>
<dbReference type="PANTHER" id="PTHR21012:SF0">
    <property type="entry name" value="ASPARTATE 1-DECARBOXYLASE"/>
    <property type="match status" value="1"/>
</dbReference>
<dbReference type="Pfam" id="PF02261">
    <property type="entry name" value="Asp_decarbox"/>
    <property type="match status" value="1"/>
</dbReference>
<dbReference type="PIRSF" id="PIRSF006246">
    <property type="entry name" value="Asp_decarbox"/>
    <property type="match status" value="1"/>
</dbReference>
<dbReference type="SUPFAM" id="SSF50692">
    <property type="entry name" value="ADC-like"/>
    <property type="match status" value="1"/>
</dbReference>
<comment type="function">
    <text evidence="1">Catalyzes the pyruvoyl-dependent decarboxylation of aspartate to produce beta-alanine.</text>
</comment>
<comment type="catalytic activity">
    <reaction evidence="1">
        <text>L-aspartate + H(+) = beta-alanine + CO2</text>
        <dbReference type="Rhea" id="RHEA:19497"/>
        <dbReference type="ChEBI" id="CHEBI:15378"/>
        <dbReference type="ChEBI" id="CHEBI:16526"/>
        <dbReference type="ChEBI" id="CHEBI:29991"/>
        <dbReference type="ChEBI" id="CHEBI:57966"/>
        <dbReference type="EC" id="4.1.1.11"/>
    </reaction>
</comment>
<comment type="cofactor">
    <cofactor evidence="1">
        <name>pyruvate</name>
        <dbReference type="ChEBI" id="CHEBI:15361"/>
    </cofactor>
    <text evidence="1">Binds 1 pyruvoyl group covalently per subunit.</text>
</comment>
<comment type="pathway">
    <text evidence="1">Cofactor biosynthesis; (R)-pantothenate biosynthesis; beta-alanine from L-aspartate: step 1/1.</text>
</comment>
<comment type="subunit">
    <text evidence="1">Heterooctamer of four alpha and four beta subunits.</text>
</comment>
<comment type="subcellular location">
    <subcellularLocation>
        <location evidence="1">Cytoplasm</location>
    </subcellularLocation>
</comment>
<comment type="PTM">
    <text evidence="1">Is synthesized initially as an inactive proenzyme, which is activated by self-cleavage at a specific serine bond to produce a beta-subunit with a hydroxyl group at its C-terminus and an alpha-subunit with a pyruvoyl group at its N-terminus.</text>
</comment>
<comment type="similarity">
    <text evidence="1">Belongs to the PanD family.</text>
</comment>
<name>PAND_METCA</name>